<name>CASP2_ARATH</name>
<feature type="chain" id="PRO_0000308666" description="Casparian strip membrane protein 2">
    <location>
        <begin position="1"/>
        <end position="204"/>
    </location>
</feature>
<feature type="topological domain" description="Cytoplasmic" evidence="1">
    <location>
        <begin position="1"/>
        <end position="42"/>
    </location>
</feature>
<feature type="transmembrane region" description="Helical" evidence="1">
    <location>
        <begin position="43"/>
        <end position="63"/>
    </location>
</feature>
<feature type="topological domain" description="Extracellular" evidence="1">
    <location>
        <begin position="64"/>
        <end position="92"/>
    </location>
</feature>
<feature type="transmembrane region" description="Helical" evidence="1">
    <location>
        <begin position="93"/>
        <end position="113"/>
    </location>
</feature>
<feature type="topological domain" description="Cytoplasmic" evidence="1">
    <location>
        <begin position="114"/>
        <end position="125"/>
    </location>
</feature>
<feature type="transmembrane region" description="Helical" evidence="1">
    <location>
        <begin position="126"/>
        <end position="146"/>
    </location>
</feature>
<feature type="topological domain" description="Extracellular" evidence="1">
    <location>
        <begin position="147"/>
        <end position="178"/>
    </location>
</feature>
<feature type="transmembrane region" description="Helical" evidence="1">
    <location>
        <begin position="179"/>
        <end position="199"/>
    </location>
</feature>
<feature type="topological domain" description="Cytoplasmic" evidence="1">
    <location>
        <begin position="200"/>
        <end position="204"/>
    </location>
</feature>
<proteinExistence type="evidence at protein level"/>
<protein>
    <recommendedName>
        <fullName>Casparian strip membrane protein 2</fullName>
        <shortName>AtCASP2</shortName>
    </recommendedName>
</protein>
<sequence>MKNESTFIDVPAESSSAMKGKAPLIGVARDHTTSGSGGYNRGLAIFDFLLRLAAIVAALAAAATMGTSDETLPFFTQFLQFEASYDDLPTFQFFVIAMALVGGYLVLSLPISVVTILRPLATAPRLLLLVLDTGVLALNTAAASSAAAISYLAHSGNQNTNWLPICQQFGDFCQKSSGAVVSAFVSVVFFTILVVISGVALKRH</sequence>
<reference key="1">
    <citation type="journal article" date="2000" name="Nature">
        <title>Sequence and analysis of chromosome 3 of the plant Arabidopsis thaliana.</title>
        <authorList>
            <person name="Salanoubat M."/>
            <person name="Lemcke K."/>
            <person name="Rieger M."/>
            <person name="Ansorge W."/>
            <person name="Unseld M."/>
            <person name="Fartmann B."/>
            <person name="Valle G."/>
            <person name="Bloecker H."/>
            <person name="Perez-Alonso M."/>
            <person name="Obermaier B."/>
            <person name="Delseny M."/>
            <person name="Boutry M."/>
            <person name="Grivell L.A."/>
            <person name="Mache R."/>
            <person name="Puigdomenech P."/>
            <person name="De Simone V."/>
            <person name="Choisne N."/>
            <person name="Artiguenave F."/>
            <person name="Robert C."/>
            <person name="Brottier P."/>
            <person name="Wincker P."/>
            <person name="Cattolico L."/>
            <person name="Weissenbach J."/>
            <person name="Saurin W."/>
            <person name="Quetier F."/>
            <person name="Schaefer M."/>
            <person name="Mueller-Auer S."/>
            <person name="Gabel C."/>
            <person name="Fuchs M."/>
            <person name="Benes V."/>
            <person name="Wurmbach E."/>
            <person name="Drzonek H."/>
            <person name="Erfle H."/>
            <person name="Jordan N."/>
            <person name="Bangert S."/>
            <person name="Wiedelmann R."/>
            <person name="Kranz H."/>
            <person name="Voss H."/>
            <person name="Holland R."/>
            <person name="Brandt P."/>
            <person name="Nyakatura G."/>
            <person name="Vezzi A."/>
            <person name="D'Angelo M."/>
            <person name="Pallavicini A."/>
            <person name="Toppo S."/>
            <person name="Simionati B."/>
            <person name="Conrad A."/>
            <person name="Hornischer K."/>
            <person name="Kauer G."/>
            <person name="Loehnert T.-H."/>
            <person name="Nordsiek G."/>
            <person name="Reichelt J."/>
            <person name="Scharfe M."/>
            <person name="Schoen O."/>
            <person name="Bargues M."/>
            <person name="Terol J."/>
            <person name="Climent J."/>
            <person name="Navarro P."/>
            <person name="Collado C."/>
            <person name="Perez-Perez A."/>
            <person name="Ottenwaelder B."/>
            <person name="Duchemin D."/>
            <person name="Cooke R."/>
            <person name="Laudie M."/>
            <person name="Berger-Llauro C."/>
            <person name="Purnelle B."/>
            <person name="Masuy D."/>
            <person name="de Haan M."/>
            <person name="Maarse A.C."/>
            <person name="Alcaraz J.-P."/>
            <person name="Cottet A."/>
            <person name="Casacuberta E."/>
            <person name="Monfort A."/>
            <person name="Argiriou A."/>
            <person name="Flores M."/>
            <person name="Liguori R."/>
            <person name="Vitale D."/>
            <person name="Mannhaupt G."/>
            <person name="Haase D."/>
            <person name="Schoof H."/>
            <person name="Rudd S."/>
            <person name="Zaccaria P."/>
            <person name="Mewes H.-W."/>
            <person name="Mayer K.F.X."/>
            <person name="Kaul S."/>
            <person name="Town C.D."/>
            <person name="Koo H.L."/>
            <person name="Tallon L.J."/>
            <person name="Jenkins J."/>
            <person name="Rooney T."/>
            <person name="Rizzo M."/>
            <person name="Walts A."/>
            <person name="Utterback T."/>
            <person name="Fujii C.Y."/>
            <person name="Shea T.P."/>
            <person name="Creasy T.H."/>
            <person name="Haas B."/>
            <person name="Maiti R."/>
            <person name="Wu D."/>
            <person name="Peterson J."/>
            <person name="Van Aken S."/>
            <person name="Pai G."/>
            <person name="Militscher J."/>
            <person name="Sellers P."/>
            <person name="Gill J.E."/>
            <person name="Feldblyum T.V."/>
            <person name="Preuss D."/>
            <person name="Lin X."/>
            <person name="Nierman W.C."/>
            <person name="Salzberg S.L."/>
            <person name="White O."/>
            <person name="Venter J.C."/>
            <person name="Fraser C.M."/>
            <person name="Kaneko T."/>
            <person name="Nakamura Y."/>
            <person name="Sato S."/>
            <person name="Kato T."/>
            <person name="Asamizu E."/>
            <person name="Sasamoto S."/>
            <person name="Kimura T."/>
            <person name="Idesawa K."/>
            <person name="Kawashima K."/>
            <person name="Kishida Y."/>
            <person name="Kiyokawa C."/>
            <person name="Kohara M."/>
            <person name="Matsumoto M."/>
            <person name="Matsuno A."/>
            <person name="Muraki A."/>
            <person name="Nakayama S."/>
            <person name="Nakazaki N."/>
            <person name="Shinpo S."/>
            <person name="Takeuchi C."/>
            <person name="Wada T."/>
            <person name="Watanabe A."/>
            <person name="Yamada M."/>
            <person name="Yasuda M."/>
            <person name="Tabata S."/>
        </authorList>
    </citation>
    <scope>NUCLEOTIDE SEQUENCE [LARGE SCALE GENOMIC DNA]</scope>
    <source>
        <strain>cv. Columbia</strain>
    </source>
</reference>
<reference key="2">
    <citation type="journal article" date="2017" name="Plant J.">
        <title>Araport11: a complete reannotation of the Arabidopsis thaliana reference genome.</title>
        <authorList>
            <person name="Cheng C.Y."/>
            <person name="Krishnakumar V."/>
            <person name="Chan A.P."/>
            <person name="Thibaud-Nissen F."/>
            <person name="Schobel S."/>
            <person name="Town C.D."/>
        </authorList>
    </citation>
    <scope>GENOME REANNOTATION</scope>
    <source>
        <strain>cv. Columbia</strain>
    </source>
</reference>
<reference key="3">
    <citation type="submission" date="2004-05" db="EMBL/GenBank/DDBJ databases">
        <title>Arabidopsis ORF clones.</title>
        <authorList>
            <person name="Cheuk R.F."/>
            <person name="Chen H."/>
            <person name="Kim C.J."/>
            <person name="Shinn P."/>
            <person name="Ecker J.R."/>
        </authorList>
    </citation>
    <scope>NUCLEOTIDE SEQUENCE [LARGE SCALE MRNA]</scope>
    <source>
        <strain>cv. Columbia</strain>
    </source>
</reference>
<reference key="4">
    <citation type="journal article" date="2011" name="Nature">
        <title>A novel protein family directs Casparian strip formation in the endodermis.</title>
        <authorList>
            <person name="Roppolo D."/>
            <person name="De Rybel B."/>
            <person name="Denervaud Tendon V."/>
            <person name="Pfister A."/>
            <person name="Alassimone J."/>
            <person name="Vermeer J.E.M."/>
            <person name="Yamazaki M."/>
            <person name="Stierhof Y.-D."/>
            <person name="Beeckman T."/>
            <person name="Geldner N."/>
        </authorList>
    </citation>
    <scope>FUNCTION</scope>
    <scope>SUBCELLULAR LOCATION</scope>
    <scope>DIMERIZATION</scope>
    <scope>INTERACTION WITH CASP1; CASP3 AND CASP4</scope>
    <source>
        <strain>cv. Columbia</strain>
    </source>
</reference>
<reference key="5">
    <citation type="journal article" date="2014" name="Plant Physiol.">
        <title>Functional and evolutionary analysis of the CASPARIAN STRIP MEMBRANE DOMAIN PROTEIN family.</title>
        <authorList>
            <person name="Roppolo D."/>
            <person name="Boeckmann B."/>
            <person name="Pfister A."/>
            <person name="Boutet E."/>
            <person name="Rubio M.C."/>
            <person name="Denervaud-Tendon V."/>
            <person name="Vermeer J.E."/>
            <person name="Gheyselinck J."/>
            <person name="Xenarios I."/>
            <person name="Geldner N."/>
        </authorList>
    </citation>
    <scope>GENE FAMILY</scope>
    <scope>NOMENCLATURE</scope>
</reference>
<comment type="function">
    <text evidence="2">Regulates membrane-cell wall junctions and localized cell wall deposition. Required for establishment of the Casparian strip membrane domain (CSD) and the subsequent formation of Casparian strips, a cell wall modification of the root endodermis that determines an apoplastic barrier between the intraorganismal apoplasm and the extraorganismal apoplasm and prevents lateral diffusion.</text>
</comment>
<comment type="subunit">
    <text evidence="2">Homodimer and heterodimers with other CASP proteins. Interacts with CASP1, CASP3 and CASP4.</text>
</comment>
<comment type="subcellular location">
    <subcellularLocation>
        <location evidence="2">Cell membrane</location>
        <topology evidence="2">Multi-pass membrane protein</topology>
    </subcellularLocation>
    <text>Very restricted localization following a belt shape within the plasma membrane which coincides with the position of the Casparian strip membrane domain.</text>
</comment>
<comment type="similarity">
    <text evidence="3">Belongs to the Casparian strip membrane proteins (CASP) family.</text>
</comment>
<dbReference type="EMBL" id="AC008153">
    <property type="protein sequence ID" value="AAG51441.1"/>
    <property type="molecule type" value="Genomic_DNA"/>
</dbReference>
<dbReference type="EMBL" id="CP002686">
    <property type="protein sequence ID" value="AEE75062.1"/>
    <property type="molecule type" value="Genomic_DNA"/>
</dbReference>
<dbReference type="EMBL" id="BT010843">
    <property type="protein sequence ID" value="AAR24210.1"/>
    <property type="molecule type" value="mRNA"/>
</dbReference>
<dbReference type="EMBL" id="BT012612">
    <property type="protein sequence ID" value="AAT06431.1"/>
    <property type="molecule type" value="mRNA"/>
</dbReference>
<dbReference type="RefSeq" id="NP_187762.1">
    <property type="nucleotide sequence ID" value="NM_111988.3"/>
</dbReference>
<dbReference type="SMR" id="Q9CAX3"/>
<dbReference type="DIP" id="DIP-59178N"/>
<dbReference type="FunCoup" id="Q9CAX3">
    <property type="interactions" value="220"/>
</dbReference>
<dbReference type="IntAct" id="Q9CAX3">
    <property type="interactions" value="3"/>
</dbReference>
<dbReference type="STRING" id="3702.Q9CAX3"/>
<dbReference type="PaxDb" id="3702-AT3G11550.1"/>
<dbReference type="ProteomicsDB" id="223866"/>
<dbReference type="EnsemblPlants" id="AT3G11550.1">
    <property type="protein sequence ID" value="AT3G11550.1"/>
    <property type="gene ID" value="AT3G11550"/>
</dbReference>
<dbReference type="GeneID" id="820328"/>
<dbReference type="Gramene" id="AT3G11550.1">
    <property type="protein sequence ID" value="AT3G11550.1"/>
    <property type="gene ID" value="AT3G11550"/>
</dbReference>
<dbReference type="KEGG" id="ath:AT3G11550"/>
<dbReference type="Araport" id="AT3G11550"/>
<dbReference type="TAIR" id="AT3G11550">
    <property type="gene designation" value="CASP2"/>
</dbReference>
<dbReference type="eggNOG" id="ENOG502QZV7">
    <property type="taxonomic scope" value="Eukaryota"/>
</dbReference>
<dbReference type="HOGENOM" id="CLU_066104_3_1_1"/>
<dbReference type="InParanoid" id="Q9CAX3"/>
<dbReference type="OMA" id="MPRRTHH"/>
<dbReference type="OrthoDB" id="753675at2759"/>
<dbReference type="PhylomeDB" id="Q9CAX3"/>
<dbReference type="PRO" id="PR:Q9CAX3"/>
<dbReference type="Proteomes" id="UP000006548">
    <property type="component" value="Chromosome 3"/>
</dbReference>
<dbReference type="ExpressionAtlas" id="Q9CAX3">
    <property type="expression patterns" value="baseline and differential"/>
</dbReference>
<dbReference type="GO" id="GO:0048226">
    <property type="term" value="C:Casparian strip"/>
    <property type="evidence" value="ECO:0000314"/>
    <property type="project" value="UniProtKB"/>
</dbReference>
<dbReference type="GO" id="GO:0005886">
    <property type="term" value="C:plasma membrane"/>
    <property type="evidence" value="ECO:0000314"/>
    <property type="project" value="UniProtKB"/>
</dbReference>
<dbReference type="GO" id="GO:0042803">
    <property type="term" value="F:protein homodimerization activity"/>
    <property type="evidence" value="ECO:0000250"/>
    <property type="project" value="UniProtKB"/>
</dbReference>
<dbReference type="GO" id="GO:0042545">
    <property type="term" value="P:cell wall modification"/>
    <property type="evidence" value="ECO:0000315"/>
    <property type="project" value="UniProtKB"/>
</dbReference>
<dbReference type="GO" id="GO:0007043">
    <property type="term" value="P:cell-cell junction assembly"/>
    <property type="evidence" value="ECO:0000314"/>
    <property type="project" value="UniProtKB"/>
</dbReference>
<dbReference type="InterPro" id="IPR006459">
    <property type="entry name" value="CASP/CASPL"/>
</dbReference>
<dbReference type="InterPro" id="IPR006702">
    <property type="entry name" value="CASP_dom"/>
</dbReference>
<dbReference type="InterPro" id="IPR044173">
    <property type="entry name" value="CASPL"/>
</dbReference>
<dbReference type="NCBIfam" id="TIGR01569">
    <property type="entry name" value="A_tha_TIGR01569"/>
    <property type="match status" value="1"/>
</dbReference>
<dbReference type="PANTHER" id="PTHR36488:SF11">
    <property type="entry name" value="CASP-LIKE PROTEIN"/>
    <property type="match status" value="1"/>
</dbReference>
<dbReference type="PANTHER" id="PTHR36488">
    <property type="entry name" value="CASP-LIKE PROTEIN 1U1"/>
    <property type="match status" value="1"/>
</dbReference>
<dbReference type="Pfam" id="PF04535">
    <property type="entry name" value="CASP_dom"/>
    <property type="match status" value="1"/>
</dbReference>
<evidence type="ECO:0000255" key="1"/>
<evidence type="ECO:0000269" key="2">
    <source>
    </source>
</evidence>
<evidence type="ECO:0000305" key="3"/>
<organism>
    <name type="scientific">Arabidopsis thaliana</name>
    <name type="common">Mouse-ear cress</name>
    <dbReference type="NCBI Taxonomy" id="3702"/>
    <lineage>
        <taxon>Eukaryota</taxon>
        <taxon>Viridiplantae</taxon>
        <taxon>Streptophyta</taxon>
        <taxon>Embryophyta</taxon>
        <taxon>Tracheophyta</taxon>
        <taxon>Spermatophyta</taxon>
        <taxon>Magnoliopsida</taxon>
        <taxon>eudicotyledons</taxon>
        <taxon>Gunneridae</taxon>
        <taxon>Pentapetalae</taxon>
        <taxon>rosids</taxon>
        <taxon>malvids</taxon>
        <taxon>Brassicales</taxon>
        <taxon>Brassicaceae</taxon>
        <taxon>Camelineae</taxon>
        <taxon>Arabidopsis</taxon>
    </lineage>
</organism>
<gene>
    <name type="primary">CASP2</name>
    <name type="ordered locus">At3g11550</name>
    <name type="ORF">F24K9.22</name>
</gene>
<accession>Q9CAX3</accession>
<keyword id="KW-1003">Cell membrane</keyword>
<keyword id="KW-0961">Cell wall biogenesis/degradation</keyword>
<keyword id="KW-0472">Membrane</keyword>
<keyword id="KW-1185">Reference proteome</keyword>
<keyword id="KW-0812">Transmembrane</keyword>
<keyword id="KW-1133">Transmembrane helix</keyword>